<evidence type="ECO:0000255" key="1">
    <source>
        <dbReference type="HAMAP-Rule" id="MF_00368"/>
    </source>
</evidence>
<evidence type="ECO:0000305" key="2"/>
<protein>
    <recommendedName>
        <fullName evidence="1">Large ribosomal subunit protein bL12</fullName>
    </recommendedName>
    <alternativeName>
        <fullName evidence="2">50S ribosomal protein L7/L12</fullName>
    </alternativeName>
</protein>
<organism>
    <name type="scientific">Prochlorococcus marinus (strain SARG / CCMP1375 / SS120)</name>
    <dbReference type="NCBI Taxonomy" id="167539"/>
    <lineage>
        <taxon>Bacteria</taxon>
        <taxon>Bacillati</taxon>
        <taxon>Cyanobacteriota</taxon>
        <taxon>Cyanophyceae</taxon>
        <taxon>Synechococcales</taxon>
        <taxon>Prochlorococcaceae</taxon>
        <taxon>Prochlorococcus</taxon>
    </lineage>
</organism>
<proteinExistence type="inferred from homology"/>
<reference key="1">
    <citation type="journal article" date="2003" name="Proc. Natl. Acad. Sci. U.S.A.">
        <title>Genome sequence of the cyanobacterium Prochlorococcus marinus SS120, a nearly minimal oxyphototrophic genome.</title>
        <authorList>
            <person name="Dufresne A."/>
            <person name="Salanoubat M."/>
            <person name="Partensky F."/>
            <person name="Artiguenave F."/>
            <person name="Axmann I.M."/>
            <person name="Barbe V."/>
            <person name="Duprat S."/>
            <person name="Galperin M.Y."/>
            <person name="Koonin E.V."/>
            <person name="Le Gall F."/>
            <person name="Makarova K.S."/>
            <person name="Ostrowski M."/>
            <person name="Oztas S."/>
            <person name="Robert C."/>
            <person name="Rogozin I.B."/>
            <person name="Scanlan D.J."/>
            <person name="Tandeau de Marsac N."/>
            <person name="Weissenbach J."/>
            <person name="Wincker P."/>
            <person name="Wolf Y.I."/>
            <person name="Hess W.R."/>
        </authorList>
    </citation>
    <scope>NUCLEOTIDE SEQUENCE [LARGE SCALE GENOMIC DNA]</scope>
    <source>
        <strain>SARG / CCMP1375 / SS120</strain>
    </source>
</reference>
<feature type="chain" id="PRO_0000243465" description="Large ribosomal subunit protein bL12">
    <location>
        <begin position="1"/>
        <end position="130"/>
    </location>
</feature>
<comment type="function">
    <text evidence="1">Forms part of the ribosomal stalk which helps the ribosome interact with GTP-bound translation factors. Is thus essential for accurate translation.</text>
</comment>
<comment type="subunit">
    <text evidence="1">Homodimer. Part of the ribosomal stalk of the 50S ribosomal subunit. Forms a multimeric L10(L12)X complex, where L10 forms an elongated spine to which 2 to 4 L12 dimers bind in a sequential fashion. Binds GTP-bound translation factors.</text>
</comment>
<comment type="similarity">
    <text evidence="1">Belongs to the bacterial ribosomal protein bL12 family.</text>
</comment>
<sequence>MSKKTDEILDSLKSLSLLEASELVKQIEEAFGVSAAASAGVVMAAPGAATGGGEAAAEEKTEFDVVLESFDASAKIKVLKEVRNATGLGLGDAKAMVEAAPKTIKEGASKEDAEALKKAIEAVGGKVTLK</sequence>
<dbReference type="EMBL" id="AE017126">
    <property type="protein sequence ID" value="AAP99273.1"/>
    <property type="molecule type" value="Genomic_DNA"/>
</dbReference>
<dbReference type="RefSeq" id="NP_874621.1">
    <property type="nucleotide sequence ID" value="NC_005042.1"/>
</dbReference>
<dbReference type="RefSeq" id="WP_011124382.1">
    <property type="nucleotide sequence ID" value="NC_005042.1"/>
</dbReference>
<dbReference type="SMR" id="Q7VDY8"/>
<dbReference type="STRING" id="167539.Pro_0227"/>
<dbReference type="EnsemblBacteria" id="AAP99273">
    <property type="protein sequence ID" value="AAP99273"/>
    <property type="gene ID" value="Pro_0227"/>
</dbReference>
<dbReference type="KEGG" id="pma:Pro_0227"/>
<dbReference type="PATRIC" id="fig|167539.5.peg.234"/>
<dbReference type="eggNOG" id="COG0222">
    <property type="taxonomic scope" value="Bacteria"/>
</dbReference>
<dbReference type="HOGENOM" id="CLU_086499_3_0_3"/>
<dbReference type="OrthoDB" id="9811748at2"/>
<dbReference type="Proteomes" id="UP000001420">
    <property type="component" value="Chromosome"/>
</dbReference>
<dbReference type="GO" id="GO:0022625">
    <property type="term" value="C:cytosolic large ribosomal subunit"/>
    <property type="evidence" value="ECO:0007669"/>
    <property type="project" value="TreeGrafter"/>
</dbReference>
<dbReference type="GO" id="GO:0003729">
    <property type="term" value="F:mRNA binding"/>
    <property type="evidence" value="ECO:0007669"/>
    <property type="project" value="TreeGrafter"/>
</dbReference>
<dbReference type="GO" id="GO:0003735">
    <property type="term" value="F:structural constituent of ribosome"/>
    <property type="evidence" value="ECO:0007669"/>
    <property type="project" value="InterPro"/>
</dbReference>
<dbReference type="GO" id="GO:0006412">
    <property type="term" value="P:translation"/>
    <property type="evidence" value="ECO:0007669"/>
    <property type="project" value="UniProtKB-UniRule"/>
</dbReference>
<dbReference type="CDD" id="cd00387">
    <property type="entry name" value="Ribosomal_L7_L12"/>
    <property type="match status" value="1"/>
</dbReference>
<dbReference type="FunFam" id="3.30.1390.10:FF:000001">
    <property type="entry name" value="50S ribosomal protein L7/L12"/>
    <property type="match status" value="1"/>
</dbReference>
<dbReference type="Gene3D" id="3.30.1390.10">
    <property type="match status" value="1"/>
</dbReference>
<dbReference type="Gene3D" id="1.20.5.710">
    <property type="entry name" value="Single helix bin"/>
    <property type="match status" value="1"/>
</dbReference>
<dbReference type="HAMAP" id="MF_00368">
    <property type="entry name" value="Ribosomal_bL12"/>
    <property type="match status" value="1"/>
</dbReference>
<dbReference type="InterPro" id="IPR000206">
    <property type="entry name" value="Ribosomal_bL12"/>
</dbReference>
<dbReference type="InterPro" id="IPR013823">
    <property type="entry name" value="Ribosomal_bL12_C"/>
</dbReference>
<dbReference type="InterPro" id="IPR014719">
    <property type="entry name" value="Ribosomal_bL12_C/ClpS-like"/>
</dbReference>
<dbReference type="InterPro" id="IPR008932">
    <property type="entry name" value="Ribosomal_bL12_oligo"/>
</dbReference>
<dbReference type="InterPro" id="IPR036235">
    <property type="entry name" value="Ribosomal_bL12_oligo_N_sf"/>
</dbReference>
<dbReference type="NCBIfam" id="TIGR00855">
    <property type="entry name" value="L12"/>
    <property type="match status" value="1"/>
</dbReference>
<dbReference type="PANTHER" id="PTHR45987">
    <property type="entry name" value="39S RIBOSOMAL PROTEIN L12"/>
    <property type="match status" value="1"/>
</dbReference>
<dbReference type="PANTHER" id="PTHR45987:SF4">
    <property type="entry name" value="LARGE RIBOSOMAL SUBUNIT PROTEIN BL12M"/>
    <property type="match status" value="1"/>
</dbReference>
<dbReference type="Pfam" id="PF00542">
    <property type="entry name" value="Ribosomal_L12"/>
    <property type="match status" value="1"/>
</dbReference>
<dbReference type="Pfam" id="PF16320">
    <property type="entry name" value="Ribosomal_L12_N"/>
    <property type="match status" value="1"/>
</dbReference>
<dbReference type="SUPFAM" id="SSF54736">
    <property type="entry name" value="ClpS-like"/>
    <property type="match status" value="1"/>
</dbReference>
<dbReference type="SUPFAM" id="SSF48300">
    <property type="entry name" value="Ribosomal protein L7/12, oligomerisation (N-terminal) domain"/>
    <property type="match status" value="1"/>
</dbReference>
<name>RL7_PROMA</name>
<keyword id="KW-1185">Reference proteome</keyword>
<keyword id="KW-0687">Ribonucleoprotein</keyword>
<keyword id="KW-0689">Ribosomal protein</keyword>
<accession>Q7VDY8</accession>
<gene>
    <name evidence="1" type="primary">rplL</name>
    <name evidence="1" type="synonym">rpl12</name>
    <name type="ordered locus">Pro_0227</name>
</gene>